<organism>
    <name type="scientific">Prochlorococcus marinus (strain MIT 9313)</name>
    <dbReference type="NCBI Taxonomy" id="74547"/>
    <lineage>
        <taxon>Bacteria</taxon>
        <taxon>Bacillati</taxon>
        <taxon>Cyanobacteriota</taxon>
        <taxon>Cyanophyceae</taxon>
        <taxon>Synechococcales</taxon>
        <taxon>Prochlorococcaceae</taxon>
        <taxon>Prochlorococcus</taxon>
    </lineage>
</organism>
<accession>Q7V844</accession>
<proteinExistence type="inferred from homology"/>
<protein>
    <recommendedName>
        <fullName evidence="1">Glutamate 5-kinase</fullName>
        <ecNumber evidence="1">2.7.2.11</ecNumber>
    </recommendedName>
    <alternativeName>
        <fullName evidence="1">Gamma-glutamyl kinase</fullName>
        <shortName evidence="1">GK</shortName>
    </alternativeName>
</protein>
<feature type="chain" id="PRO_0000109707" description="Glutamate 5-kinase">
    <location>
        <begin position="1"/>
        <end position="361"/>
    </location>
</feature>
<feature type="domain" description="PUA" evidence="1">
    <location>
        <begin position="274"/>
        <end position="345"/>
    </location>
</feature>
<feature type="binding site" evidence="1">
    <location>
        <position position="7"/>
    </location>
    <ligand>
        <name>ATP</name>
        <dbReference type="ChEBI" id="CHEBI:30616"/>
    </ligand>
</feature>
<feature type="binding site" evidence="1">
    <location>
        <position position="47"/>
    </location>
    <ligand>
        <name>substrate</name>
    </ligand>
</feature>
<feature type="binding site" evidence="1">
    <location>
        <position position="134"/>
    </location>
    <ligand>
        <name>substrate</name>
    </ligand>
</feature>
<feature type="binding site" evidence="1">
    <location>
        <position position="146"/>
    </location>
    <ligand>
        <name>substrate</name>
    </ligand>
</feature>
<feature type="binding site" evidence="1">
    <location>
        <begin position="166"/>
        <end position="167"/>
    </location>
    <ligand>
        <name>ATP</name>
        <dbReference type="ChEBI" id="CHEBI:30616"/>
    </ligand>
</feature>
<feature type="binding site" evidence="1">
    <location>
        <begin position="209"/>
        <end position="215"/>
    </location>
    <ligand>
        <name>ATP</name>
        <dbReference type="ChEBI" id="CHEBI:30616"/>
    </ligand>
</feature>
<keyword id="KW-0028">Amino-acid biosynthesis</keyword>
<keyword id="KW-0067">ATP-binding</keyword>
<keyword id="KW-0963">Cytoplasm</keyword>
<keyword id="KW-0418">Kinase</keyword>
<keyword id="KW-0547">Nucleotide-binding</keyword>
<keyword id="KW-0641">Proline biosynthesis</keyword>
<keyword id="KW-1185">Reference proteome</keyword>
<keyword id="KW-0808">Transferase</keyword>
<comment type="function">
    <text evidence="1">Catalyzes the transfer of a phosphate group to glutamate to form L-glutamate 5-phosphate.</text>
</comment>
<comment type="catalytic activity">
    <reaction evidence="1">
        <text>L-glutamate + ATP = L-glutamyl 5-phosphate + ADP</text>
        <dbReference type="Rhea" id="RHEA:14877"/>
        <dbReference type="ChEBI" id="CHEBI:29985"/>
        <dbReference type="ChEBI" id="CHEBI:30616"/>
        <dbReference type="ChEBI" id="CHEBI:58274"/>
        <dbReference type="ChEBI" id="CHEBI:456216"/>
        <dbReference type="EC" id="2.7.2.11"/>
    </reaction>
</comment>
<comment type="pathway">
    <text evidence="1">Amino-acid biosynthesis; L-proline biosynthesis; L-glutamate 5-semialdehyde from L-glutamate: step 1/2.</text>
</comment>
<comment type="subcellular location">
    <subcellularLocation>
        <location evidence="1">Cytoplasm</location>
    </subcellularLocation>
</comment>
<comment type="similarity">
    <text evidence="1">Belongs to the glutamate 5-kinase family.</text>
</comment>
<name>PROB_PROMM</name>
<dbReference type="EC" id="2.7.2.11" evidence="1"/>
<dbReference type="EMBL" id="BX548175">
    <property type="protein sequence ID" value="CAE20704.1"/>
    <property type="molecule type" value="Genomic_DNA"/>
</dbReference>
<dbReference type="RefSeq" id="WP_011129908.1">
    <property type="nucleotide sequence ID" value="NC_005071.1"/>
</dbReference>
<dbReference type="SMR" id="Q7V844"/>
<dbReference type="KEGG" id="pmt:PMT_0529"/>
<dbReference type="eggNOG" id="COG0263">
    <property type="taxonomic scope" value="Bacteria"/>
</dbReference>
<dbReference type="HOGENOM" id="CLU_025400_2_0_3"/>
<dbReference type="OrthoDB" id="9804434at2"/>
<dbReference type="UniPathway" id="UPA00098">
    <property type="reaction ID" value="UER00359"/>
</dbReference>
<dbReference type="Proteomes" id="UP000001423">
    <property type="component" value="Chromosome"/>
</dbReference>
<dbReference type="GO" id="GO:0005829">
    <property type="term" value="C:cytosol"/>
    <property type="evidence" value="ECO:0007669"/>
    <property type="project" value="TreeGrafter"/>
</dbReference>
<dbReference type="GO" id="GO:0005524">
    <property type="term" value="F:ATP binding"/>
    <property type="evidence" value="ECO:0007669"/>
    <property type="project" value="UniProtKB-KW"/>
</dbReference>
<dbReference type="GO" id="GO:0004349">
    <property type="term" value="F:glutamate 5-kinase activity"/>
    <property type="evidence" value="ECO:0007669"/>
    <property type="project" value="UniProtKB-UniRule"/>
</dbReference>
<dbReference type="GO" id="GO:0003723">
    <property type="term" value="F:RNA binding"/>
    <property type="evidence" value="ECO:0007669"/>
    <property type="project" value="InterPro"/>
</dbReference>
<dbReference type="GO" id="GO:0055129">
    <property type="term" value="P:L-proline biosynthetic process"/>
    <property type="evidence" value="ECO:0007669"/>
    <property type="project" value="UniProtKB-UniRule"/>
</dbReference>
<dbReference type="CDD" id="cd04242">
    <property type="entry name" value="AAK_G5K_ProB"/>
    <property type="match status" value="1"/>
</dbReference>
<dbReference type="CDD" id="cd21157">
    <property type="entry name" value="PUA_G5K"/>
    <property type="match status" value="1"/>
</dbReference>
<dbReference type="FunFam" id="3.40.1160.10:FF:000018">
    <property type="entry name" value="Glutamate 5-kinase"/>
    <property type="match status" value="1"/>
</dbReference>
<dbReference type="Gene3D" id="3.40.1160.10">
    <property type="entry name" value="Acetylglutamate kinase-like"/>
    <property type="match status" value="1"/>
</dbReference>
<dbReference type="Gene3D" id="2.30.130.10">
    <property type="entry name" value="PUA domain"/>
    <property type="match status" value="1"/>
</dbReference>
<dbReference type="HAMAP" id="MF_00456">
    <property type="entry name" value="ProB"/>
    <property type="match status" value="1"/>
</dbReference>
<dbReference type="InterPro" id="IPR036393">
    <property type="entry name" value="AceGlu_kinase-like_sf"/>
</dbReference>
<dbReference type="InterPro" id="IPR001048">
    <property type="entry name" value="Asp/Glu/Uridylate_kinase"/>
</dbReference>
<dbReference type="InterPro" id="IPR041739">
    <property type="entry name" value="G5K_ProB"/>
</dbReference>
<dbReference type="InterPro" id="IPR001057">
    <property type="entry name" value="Glu/AcGlu_kinase"/>
</dbReference>
<dbReference type="InterPro" id="IPR011529">
    <property type="entry name" value="Glu_5kinase"/>
</dbReference>
<dbReference type="InterPro" id="IPR005715">
    <property type="entry name" value="Glu_5kinase/COase_Synthase"/>
</dbReference>
<dbReference type="InterPro" id="IPR019797">
    <property type="entry name" value="Glutamate_5-kinase_CS"/>
</dbReference>
<dbReference type="InterPro" id="IPR002478">
    <property type="entry name" value="PUA"/>
</dbReference>
<dbReference type="InterPro" id="IPR015947">
    <property type="entry name" value="PUA-like_sf"/>
</dbReference>
<dbReference type="InterPro" id="IPR036974">
    <property type="entry name" value="PUA_sf"/>
</dbReference>
<dbReference type="NCBIfam" id="TIGR01027">
    <property type="entry name" value="proB"/>
    <property type="match status" value="1"/>
</dbReference>
<dbReference type="PANTHER" id="PTHR43654">
    <property type="entry name" value="GLUTAMATE 5-KINASE"/>
    <property type="match status" value="1"/>
</dbReference>
<dbReference type="PANTHER" id="PTHR43654:SF3">
    <property type="entry name" value="GLUTAMATE 5-KINASE"/>
    <property type="match status" value="1"/>
</dbReference>
<dbReference type="Pfam" id="PF00696">
    <property type="entry name" value="AA_kinase"/>
    <property type="match status" value="1"/>
</dbReference>
<dbReference type="Pfam" id="PF01472">
    <property type="entry name" value="PUA"/>
    <property type="match status" value="1"/>
</dbReference>
<dbReference type="PIRSF" id="PIRSF000729">
    <property type="entry name" value="GK"/>
    <property type="match status" value="1"/>
</dbReference>
<dbReference type="PRINTS" id="PR00474">
    <property type="entry name" value="GLU5KINASE"/>
</dbReference>
<dbReference type="SMART" id="SM00359">
    <property type="entry name" value="PUA"/>
    <property type="match status" value="1"/>
</dbReference>
<dbReference type="SUPFAM" id="SSF53633">
    <property type="entry name" value="Carbamate kinase-like"/>
    <property type="match status" value="1"/>
</dbReference>
<dbReference type="SUPFAM" id="SSF88697">
    <property type="entry name" value="PUA domain-like"/>
    <property type="match status" value="1"/>
</dbReference>
<dbReference type="PROSITE" id="PS00902">
    <property type="entry name" value="GLUTAMATE_5_KINASE"/>
    <property type="match status" value="1"/>
</dbReference>
<dbReference type="PROSITE" id="PS50890">
    <property type="entry name" value="PUA"/>
    <property type="match status" value="1"/>
</dbReference>
<gene>
    <name evidence="1" type="primary">proB</name>
    <name type="ordered locus">PMT_0529</name>
</gene>
<reference key="1">
    <citation type="journal article" date="2003" name="Nature">
        <title>Genome divergence in two Prochlorococcus ecotypes reflects oceanic niche differentiation.</title>
        <authorList>
            <person name="Rocap G."/>
            <person name="Larimer F.W."/>
            <person name="Lamerdin J.E."/>
            <person name="Malfatti S."/>
            <person name="Chain P."/>
            <person name="Ahlgren N.A."/>
            <person name="Arellano A."/>
            <person name="Coleman M."/>
            <person name="Hauser L."/>
            <person name="Hess W.R."/>
            <person name="Johnson Z.I."/>
            <person name="Land M.L."/>
            <person name="Lindell D."/>
            <person name="Post A.F."/>
            <person name="Regala W."/>
            <person name="Shah M."/>
            <person name="Shaw S.L."/>
            <person name="Steglich C."/>
            <person name="Sullivan M.B."/>
            <person name="Ting C.S."/>
            <person name="Tolonen A."/>
            <person name="Webb E.A."/>
            <person name="Zinser E.R."/>
            <person name="Chisholm S.W."/>
        </authorList>
    </citation>
    <scope>NUCLEOTIDE SEQUENCE [LARGE SCALE GENOMIC DNA]</scope>
    <source>
        <strain>MIT 9313</strain>
    </source>
</reference>
<sequence length="361" mass="38511">MSLWVVKVGTSLLRGNEKQSTAEVIESYSACLSASLKRGDHVVLVTSGAVGLGCNRLGLSQRPVDVVALQGTAAIGQGQLMALYEAAMSRRGHTVAQVLLTRSDLGSRQRYRNASSTLKQLLDWGVLPVVNENDALSPEELRYGDNDTLSALVATAVEADQLIMLTDVDRLYSSDPRINASAEPISDVYHPHELTALEVAAGEGGAWGTGGMTTKLAAARIATASGITVLLADGRDPQVLDGLLQGRRSGTVFHPHPQPLGNRKSWLAHALKPLGTLQLDEGACDALQHRGASLLLVGVKEVEGNFEANQPVRLINPEGNELARGLCSLSSKELREAIETQMSTNRSPVVVHRDVLVLRNA</sequence>
<evidence type="ECO:0000255" key="1">
    <source>
        <dbReference type="HAMAP-Rule" id="MF_00456"/>
    </source>
</evidence>